<protein>
    <recommendedName>
        <fullName evidence="1">Glutamate--tRNA ligase 2</fullName>
        <ecNumber evidence="1">6.1.1.17</ecNumber>
    </recommendedName>
    <alternativeName>
        <fullName evidence="1">Glutamyl-tRNA synthetase 2</fullName>
        <shortName evidence="1">GluRS 2</shortName>
    </alternativeName>
</protein>
<reference key="1">
    <citation type="submission" date="2007-04" db="EMBL/GenBank/DDBJ databases">
        <title>Genome sequence of the thermophilic hydrogen-producing bacterium Caldicellulosiruptor saccharolyticus DSM 8903.</title>
        <authorList>
            <person name="Copeland A."/>
            <person name="Lucas S."/>
            <person name="Lapidus A."/>
            <person name="Barry K."/>
            <person name="Detter J.C."/>
            <person name="Glavina del Rio T."/>
            <person name="Hammon N."/>
            <person name="Israni S."/>
            <person name="Dalin E."/>
            <person name="Tice H."/>
            <person name="Pitluck S."/>
            <person name="Kiss H."/>
            <person name="Brettin T."/>
            <person name="Bruce D."/>
            <person name="Han C."/>
            <person name="Schmutz J."/>
            <person name="Larimer F."/>
            <person name="Land M."/>
            <person name="Hauser L."/>
            <person name="Kyrpides N."/>
            <person name="Lykidis A."/>
            <person name="van de Werken H.J.G."/>
            <person name="Verhaart M.R.A."/>
            <person name="VanFossen A.L."/>
            <person name="Lewis D.L."/>
            <person name="Nichols J.D."/>
            <person name="Goorissen H.P."/>
            <person name="van Niel E.W.J."/>
            <person name="Stams F.J.M."/>
            <person name="Willquist K.U."/>
            <person name="Ward D.E."/>
            <person name="van der Oost J."/>
            <person name="Kelly R.M."/>
            <person name="Kengen S.M.W."/>
            <person name="Richardson P."/>
        </authorList>
    </citation>
    <scope>NUCLEOTIDE SEQUENCE [LARGE SCALE GENOMIC DNA]</scope>
    <source>
        <strain>ATCC 43494 / DSM 8903 / Tp8T 6331</strain>
    </source>
</reference>
<dbReference type="EC" id="6.1.1.17" evidence="1"/>
<dbReference type="EMBL" id="CP000679">
    <property type="protein sequence ID" value="ABP67768.1"/>
    <property type="molecule type" value="Genomic_DNA"/>
</dbReference>
<dbReference type="RefSeq" id="WP_011917697.1">
    <property type="nucleotide sequence ID" value="NC_009437.1"/>
</dbReference>
<dbReference type="SMR" id="A4XLI3"/>
<dbReference type="STRING" id="351627.Csac_2186"/>
<dbReference type="KEGG" id="csc:Csac_2186"/>
<dbReference type="eggNOG" id="COG0008">
    <property type="taxonomic scope" value="Bacteria"/>
</dbReference>
<dbReference type="HOGENOM" id="CLU_015768_6_3_9"/>
<dbReference type="OrthoDB" id="9807503at2"/>
<dbReference type="Proteomes" id="UP000000256">
    <property type="component" value="Chromosome"/>
</dbReference>
<dbReference type="GO" id="GO:0005829">
    <property type="term" value="C:cytosol"/>
    <property type="evidence" value="ECO:0007669"/>
    <property type="project" value="TreeGrafter"/>
</dbReference>
<dbReference type="GO" id="GO:0005524">
    <property type="term" value="F:ATP binding"/>
    <property type="evidence" value="ECO:0007669"/>
    <property type="project" value="UniProtKB-UniRule"/>
</dbReference>
<dbReference type="GO" id="GO:0004818">
    <property type="term" value="F:glutamate-tRNA ligase activity"/>
    <property type="evidence" value="ECO:0007669"/>
    <property type="project" value="UniProtKB-UniRule"/>
</dbReference>
<dbReference type="GO" id="GO:0000049">
    <property type="term" value="F:tRNA binding"/>
    <property type="evidence" value="ECO:0007669"/>
    <property type="project" value="InterPro"/>
</dbReference>
<dbReference type="GO" id="GO:0008270">
    <property type="term" value="F:zinc ion binding"/>
    <property type="evidence" value="ECO:0007669"/>
    <property type="project" value="InterPro"/>
</dbReference>
<dbReference type="GO" id="GO:0006424">
    <property type="term" value="P:glutamyl-tRNA aminoacylation"/>
    <property type="evidence" value="ECO:0007669"/>
    <property type="project" value="UniProtKB-UniRule"/>
</dbReference>
<dbReference type="CDD" id="cd00808">
    <property type="entry name" value="GluRS_core"/>
    <property type="match status" value="1"/>
</dbReference>
<dbReference type="FunFam" id="3.40.50.620:FF:000045">
    <property type="entry name" value="Glutamate--tRNA ligase, mitochondrial"/>
    <property type="match status" value="1"/>
</dbReference>
<dbReference type="Gene3D" id="1.10.10.350">
    <property type="match status" value="1"/>
</dbReference>
<dbReference type="Gene3D" id="1.10.8.70">
    <property type="entry name" value="Glutamate-tRNA synthetase, class I, anticodon-binding domain 1"/>
    <property type="match status" value="1"/>
</dbReference>
<dbReference type="Gene3D" id="3.40.50.620">
    <property type="entry name" value="HUPs"/>
    <property type="match status" value="1"/>
</dbReference>
<dbReference type="HAMAP" id="MF_00022">
    <property type="entry name" value="Glu_tRNA_synth_type1"/>
    <property type="match status" value="1"/>
</dbReference>
<dbReference type="InterPro" id="IPR045462">
    <property type="entry name" value="aa-tRNA-synth_I_cd-bd"/>
</dbReference>
<dbReference type="InterPro" id="IPR020751">
    <property type="entry name" value="aa-tRNA-synth_I_codon-bd_sub2"/>
</dbReference>
<dbReference type="InterPro" id="IPR001412">
    <property type="entry name" value="aa-tRNA-synth_I_CS"/>
</dbReference>
<dbReference type="InterPro" id="IPR008925">
    <property type="entry name" value="aa_tRNA-synth_I_cd-bd_sf"/>
</dbReference>
<dbReference type="InterPro" id="IPR004527">
    <property type="entry name" value="Glu-tRNA-ligase_bac/mito"/>
</dbReference>
<dbReference type="InterPro" id="IPR020752">
    <property type="entry name" value="Glu-tRNA-synth_I_codon-bd_sub1"/>
</dbReference>
<dbReference type="InterPro" id="IPR000924">
    <property type="entry name" value="Glu/Gln-tRNA-synth"/>
</dbReference>
<dbReference type="InterPro" id="IPR020058">
    <property type="entry name" value="Glu/Gln-tRNA-synth_Ib_cat-dom"/>
</dbReference>
<dbReference type="InterPro" id="IPR049940">
    <property type="entry name" value="GluQ/Sye"/>
</dbReference>
<dbReference type="InterPro" id="IPR033910">
    <property type="entry name" value="GluRS_core"/>
</dbReference>
<dbReference type="InterPro" id="IPR014729">
    <property type="entry name" value="Rossmann-like_a/b/a_fold"/>
</dbReference>
<dbReference type="NCBIfam" id="TIGR00464">
    <property type="entry name" value="gltX_bact"/>
    <property type="match status" value="1"/>
</dbReference>
<dbReference type="PANTHER" id="PTHR43311">
    <property type="entry name" value="GLUTAMATE--TRNA LIGASE"/>
    <property type="match status" value="1"/>
</dbReference>
<dbReference type="PANTHER" id="PTHR43311:SF2">
    <property type="entry name" value="GLUTAMATE--TRNA LIGASE, MITOCHONDRIAL-RELATED"/>
    <property type="match status" value="1"/>
</dbReference>
<dbReference type="Pfam" id="PF19269">
    <property type="entry name" value="Anticodon_2"/>
    <property type="match status" value="1"/>
</dbReference>
<dbReference type="Pfam" id="PF00749">
    <property type="entry name" value="tRNA-synt_1c"/>
    <property type="match status" value="1"/>
</dbReference>
<dbReference type="PRINTS" id="PR00987">
    <property type="entry name" value="TRNASYNTHGLU"/>
</dbReference>
<dbReference type="SUPFAM" id="SSF48163">
    <property type="entry name" value="An anticodon-binding domain of class I aminoacyl-tRNA synthetases"/>
    <property type="match status" value="1"/>
</dbReference>
<dbReference type="SUPFAM" id="SSF52374">
    <property type="entry name" value="Nucleotidylyl transferase"/>
    <property type="match status" value="1"/>
</dbReference>
<dbReference type="PROSITE" id="PS00178">
    <property type="entry name" value="AA_TRNA_LIGASE_I"/>
    <property type="match status" value="1"/>
</dbReference>
<organism>
    <name type="scientific">Caldicellulosiruptor saccharolyticus (strain ATCC 43494 / DSM 8903 / Tp8T 6331)</name>
    <dbReference type="NCBI Taxonomy" id="351627"/>
    <lineage>
        <taxon>Bacteria</taxon>
        <taxon>Bacillati</taxon>
        <taxon>Bacillota</taxon>
        <taxon>Bacillota incertae sedis</taxon>
        <taxon>Caldicellulosiruptorales</taxon>
        <taxon>Caldicellulosiruptoraceae</taxon>
        <taxon>Caldicellulosiruptor</taxon>
    </lineage>
</organism>
<feature type="chain" id="PRO_0000367632" description="Glutamate--tRNA ligase 2">
    <location>
        <begin position="1"/>
        <end position="482"/>
    </location>
</feature>
<feature type="short sequence motif" description="'HIGH' region" evidence="1">
    <location>
        <begin position="8"/>
        <end position="18"/>
    </location>
</feature>
<feature type="short sequence motif" description="'KMSKS' region" evidence="1">
    <location>
        <begin position="249"/>
        <end position="253"/>
    </location>
</feature>
<feature type="binding site" evidence="1">
    <location>
        <position position="252"/>
    </location>
    <ligand>
        <name>ATP</name>
        <dbReference type="ChEBI" id="CHEBI:30616"/>
    </ligand>
</feature>
<keyword id="KW-0030">Aminoacyl-tRNA synthetase</keyword>
<keyword id="KW-0067">ATP-binding</keyword>
<keyword id="KW-0963">Cytoplasm</keyword>
<keyword id="KW-0436">Ligase</keyword>
<keyword id="KW-0547">Nucleotide-binding</keyword>
<keyword id="KW-0648">Protein biosynthesis</keyword>
<evidence type="ECO:0000255" key="1">
    <source>
        <dbReference type="HAMAP-Rule" id="MF_00022"/>
    </source>
</evidence>
<sequence>MVRVRFAPSPTGQLHIGGARTALFNYLFAKKHNGKFILRIEDTDLERSREEWAKAIMKSLKWLGIEWDEGPDIGGEFGPYFQSQRKDIYMEYINKLLEEGKAYYCFCSQEEIEKEREIAKQNKVSYKYSKKCRNISLEEAKRRIKNGEKAAVRIKAPQDGVTVVHDIIRGDVEFSNDQLDDFIILKSDGNPTYNFVCVVDDYFMKISHVIRAEEHLSNTPKQLIIYQALNLTPPQFAHVPMILAPDRSKLSKRHGATSVEEFFENGYLKEAIVNYLLLLGWSPGEDRTIIGLDEAIEKFELEKVSKNAAIYDVNKLTWINGHYLKEIHIEDLYERMKYFYSKKGIEIERFDKEYVKSALKLVREKVKTLVEVVDASTYFFDDSYEYDQKGVEKYLTPENLNIVKSLLDELKNLEPFSAPEIESLVRKKAESLNVKAANIIHTIRVCISGRTVTPGLFEMMEVLGKKEVVKRIERTCEKFLIK</sequence>
<gene>
    <name evidence="1" type="primary">gltX2</name>
    <name type="ordered locus">Csac_2186</name>
</gene>
<accession>A4XLI3</accession>
<comment type="function">
    <text evidence="1">Catalyzes the attachment of glutamate to tRNA(Glu) in a two-step reaction: glutamate is first activated by ATP to form Glu-AMP and then transferred to the acceptor end of tRNA(Glu).</text>
</comment>
<comment type="catalytic activity">
    <reaction evidence="1">
        <text>tRNA(Glu) + L-glutamate + ATP = L-glutamyl-tRNA(Glu) + AMP + diphosphate</text>
        <dbReference type="Rhea" id="RHEA:23540"/>
        <dbReference type="Rhea" id="RHEA-COMP:9663"/>
        <dbReference type="Rhea" id="RHEA-COMP:9680"/>
        <dbReference type="ChEBI" id="CHEBI:29985"/>
        <dbReference type="ChEBI" id="CHEBI:30616"/>
        <dbReference type="ChEBI" id="CHEBI:33019"/>
        <dbReference type="ChEBI" id="CHEBI:78442"/>
        <dbReference type="ChEBI" id="CHEBI:78520"/>
        <dbReference type="ChEBI" id="CHEBI:456215"/>
        <dbReference type="EC" id="6.1.1.17"/>
    </reaction>
</comment>
<comment type="subunit">
    <text evidence="1">Monomer.</text>
</comment>
<comment type="subcellular location">
    <subcellularLocation>
        <location evidence="1">Cytoplasm</location>
    </subcellularLocation>
</comment>
<comment type="similarity">
    <text evidence="1">Belongs to the class-I aminoacyl-tRNA synthetase family. Glutamate--tRNA ligase type 1 subfamily.</text>
</comment>
<proteinExistence type="inferred from homology"/>
<name>SYE2_CALS8</name>